<organism>
    <name type="scientific">Escherichia coli O6:K15:H31 (strain 536 / UPEC)</name>
    <dbReference type="NCBI Taxonomy" id="362663"/>
    <lineage>
        <taxon>Bacteria</taxon>
        <taxon>Pseudomonadati</taxon>
        <taxon>Pseudomonadota</taxon>
        <taxon>Gammaproteobacteria</taxon>
        <taxon>Enterobacterales</taxon>
        <taxon>Enterobacteriaceae</taxon>
        <taxon>Escherichia</taxon>
    </lineage>
</organism>
<name>NUOH_ECOL5</name>
<proteinExistence type="inferred from homology"/>
<sequence length="325" mass="36205">MSWISPELIEILLTVLKAVVILLVVVTCGAFMSFGERRLLGLFQNRYGPNRVGWGGSLQLVADMIKMFFKEDWIPKFSDRVIFTLAPMIAFTSLLLAFAIVPVSPGWVVADLNIGILFFLMMAGLAVYAVLFAGWSSNNKYSLLGAMRASAQTLSYEVFLGLSLMGVVAQAGSFNMTDIVNSQAHVWNVIPQFFGFITFAIAGVAVCHRHPFDQPEAEQELADGYHIEYSGMKFGLFFVGEYIGIVTISALMVTLFFGGWQGPLLPPFIWFALKTAFFMMMFILIRASLPRPRYDQVMSFGWKICLPLTLINLLVTAAVILWQAQ</sequence>
<dbReference type="EC" id="7.1.1.-" evidence="1"/>
<dbReference type="EMBL" id="CP000247">
    <property type="protein sequence ID" value="ABG70315.1"/>
    <property type="molecule type" value="Genomic_DNA"/>
</dbReference>
<dbReference type="RefSeq" id="WP_000118512.1">
    <property type="nucleotide sequence ID" value="NC_008253.1"/>
</dbReference>
<dbReference type="SMR" id="Q0TFG4"/>
<dbReference type="KEGG" id="ecp:ECP_2321"/>
<dbReference type="HOGENOM" id="CLU_015134_0_1_6"/>
<dbReference type="Proteomes" id="UP000009182">
    <property type="component" value="Chromosome"/>
</dbReference>
<dbReference type="GO" id="GO:0005886">
    <property type="term" value="C:plasma membrane"/>
    <property type="evidence" value="ECO:0007669"/>
    <property type="project" value="UniProtKB-SubCell"/>
</dbReference>
<dbReference type="GO" id="GO:0003954">
    <property type="term" value="F:NADH dehydrogenase activity"/>
    <property type="evidence" value="ECO:0007669"/>
    <property type="project" value="TreeGrafter"/>
</dbReference>
<dbReference type="GO" id="GO:0016655">
    <property type="term" value="F:oxidoreductase activity, acting on NAD(P)H, quinone or similar compound as acceptor"/>
    <property type="evidence" value="ECO:0007669"/>
    <property type="project" value="UniProtKB-UniRule"/>
</dbReference>
<dbReference type="GO" id="GO:0048038">
    <property type="term" value="F:quinone binding"/>
    <property type="evidence" value="ECO:0007669"/>
    <property type="project" value="UniProtKB-KW"/>
</dbReference>
<dbReference type="GO" id="GO:0009060">
    <property type="term" value="P:aerobic respiration"/>
    <property type="evidence" value="ECO:0007669"/>
    <property type="project" value="TreeGrafter"/>
</dbReference>
<dbReference type="HAMAP" id="MF_01350">
    <property type="entry name" value="NDH1_NuoH"/>
    <property type="match status" value="1"/>
</dbReference>
<dbReference type="InterPro" id="IPR001694">
    <property type="entry name" value="NADH_UbQ_OxRdtase_su1/FPO"/>
</dbReference>
<dbReference type="InterPro" id="IPR018086">
    <property type="entry name" value="NADH_UbQ_OxRdtase_su1_CS"/>
</dbReference>
<dbReference type="NCBIfam" id="NF004740">
    <property type="entry name" value="PRK06076.1-1"/>
    <property type="match status" value="1"/>
</dbReference>
<dbReference type="NCBIfam" id="NF004741">
    <property type="entry name" value="PRK06076.1-2"/>
    <property type="match status" value="1"/>
</dbReference>
<dbReference type="PANTHER" id="PTHR11432">
    <property type="entry name" value="NADH DEHYDROGENASE SUBUNIT 1"/>
    <property type="match status" value="1"/>
</dbReference>
<dbReference type="PANTHER" id="PTHR11432:SF3">
    <property type="entry name" value="NADH-UBIQUINONE OXIDOREDUCTASE CHAIN 1"/>
    <property type="match status" value="1"/>
</dbReference>
<dbReference type="Pfam" id="PF00146">
    <property type="entry name" value="NADHdh"/>
    <property type="match status" value="1"/>
</dbReference>
<dbReference type="PROSITE" id="PS00667">
    <property type="entry name" value="COMPLEX1_ND1_1"/>
    <property type="match status" value="1"/>
</dbReference>
<dbReference type="PROSITE" id="PS00668">
    <property type="entry name" value="COMPLEX1_ND1_2"/>
    <property type="match status" value="1"/>
</dbReference>
<reference key="1">
    <citation type="journal article" date="2006" name="Mol. Microbiol.">
        <title>Role of pathogenicity island-associated integrases in the genome plasticity of uropathogenic Escherichia coli strain 536.</title>
        <authorList>
            <person name="Hochhut B."/>
            <person name="Wilde C."/>
            <person name="Balling G."/>
            <person name="Middendorf B."/>
            <person name="Dobrindt U."/>
            <person name="Brzuszkiewicz E."/>
            <person name="Gottschalk G."/>
            <person name="Carniel E."/>
            <person name="Hacker J."/>
        </authorList>
    </citation>
    <scope>NUCLEOTIDE SEQUENCE [LARGE SCALE GENOMIC DNA]</scope>
    <source>
        <strain>536 / UPEC</strain>
    </source>
</reference>
<feature type="chain" id="PRO_0000298811" description="NADH-quinone oxidoreductase subunit H">
    <location>
        <begin position="1"/>
        <end position="325"/>
    </location>
</feature>
<feature type="transmembrane region" description="Helical" evidence="1">
    <location>
        <begin position="11"/>
        <end position="31"/>
    </location>
</feature>
<feature type="transmembrane region" description="Helical" evidence="1">
    <location>
        <begin position="81"/>
        <end position="101"/>
    </location>
</feature>
<feature type="transmembrane region" description="Helical" evidence="1">
    <location>
        <begin position="114"/>
        <end position="134"/>
    </location>
</feature>
<feature type="transmembrane region" description="Helical" evidence="1">
    <location>
        <begin position="154"/>
        <end position="174"/>
    </location>
</feature>
<feature type="transmembrane region" description="Helical" evidence="1">
    <location>
        <begin position="186"/>
        <end position="206"/>
    </location>
</feature>
<feature type="transmembrane region" description="Helical" evidence="1">
    <location>
        <begin position="237"/>
        <end position="257"/>
    </location>
</feature>
<feature type="transmembrane region" description="Helical" evidence="1">
    <location>
        <begin position="265"/>
        <end position="285"/>
    </location>
</feature>
<feature type="transmembrane region" description="Helical" evidence="1">
    <location>
        <begin position="304"/>
        <end position="324"/>
    </location>
</feature>
<gene>
    <name evidence="1" type="primary">nuoH</name>
    <name type="ordered locus">ECP_2321</name>
</gene>
<protein>
    <recommendedName>
        <fullName evidence="1">NADH-quinone oxidoreductase subunit H</fullName>
        <ecNumber evidence="1">7.1.1.-</ecNumber>
    </recommendedName>
    <alternativeName>
        <fullName evidence="1">NADH dehydrogenase I subunit H</fullName>
    </alternativeName>
    <alternativeName>
        <fullName evidence="1">NDH-1 subunit H</fullName>
    </alternativeName>
</protein>
<accession>Q0TFG4</accession>
<comment type="function">
    <text evidence="1">NDH-1 shuttles electrons from NADH, via FMN and iron-sulfur (Fe-S) centers, to quinones in the respiratory chain. The immediate electron acceptor for the enzyme in this species is believed to be ubiquinone. Couples the redox reaction to proton translocation (for every two electrons transferred, four hydrogen ions are translocated across the cytoplasmic membrane), and thus conserves the redox energy in a proton gradient. This subunit may bind ubiquinone.</text>
</comment>
<comment type="catalytic activity">
    <reaction evidence="1">
        <text>a quinone + NADH + 5 H(+)(in) = a quinol + NAD(+) + 4 H(+)(out)</text>
        <dbReference type="Rhea" id="RHEA:57888"/>
        <dbReference type="ChEBI" id="CHEBI:15378"/>
        <dbReference type="ChEBI" id="CHEBI:24646"/>
        <dbReference type="ChEBI" id="CHEBI:57540"/>
        <dbReference type="ChEBI" id="CHEBI:57945"/>
        <dbReference type="ChEBI" id="CHEBI:132124"/>
    </reaction>
</comment>
<comment type="subunit">
    <text evidence="1">NDH-1 is composed of 13 different subunits. Subunits NuoA, H, J, K, L, M, N constitute the membrane sector of the complex.</text>
</comment>
<comment type="subcellular location">
    <subcellularLocation>
        <location evidence="1">Cell inner membrane</location>
        <topology evidence="1">Multi-pass membrane protein</topology>
    </subcellularLocation>
</comment>
<comment type="similarity">
    <text evidence="1">Belongs to the complex I subunit 1 family.</text>
</comment>
<keyword id="KW-0997">Cell inner membrane</keyword>
<keyword id="KW-1003">Cell membrane</keyword>
<keyword id="KW-0472">Membrane</keyword>
<keyword id="KW-0520">NAD</keyword>
<keyword id="KW-0874">Quinone</keyword>
<keyword id="KW-1278">Translocase</keyword>
<keyword id="KW-0812">Transmembrane</keyword>
<keyword id="KW-1133">Transmembrane helix</keyword>
<keyword id="KW-0830">Ubiquinone</keyword>
<evidence type="ECO:0000255" key="1">
    <source>
        <dbReference type="HAMAP-Rule" id="MF_01350"/>
    </source>
</evidence>